<feature type="chain" id="PRO_0000347904" description="Response regulator protein GraR">
    <location>
        <begin position="1"/>
        <end position="224"/>
    </location>
</feature>
<feature type="domain" description="Response regulatory" evidence="4">
    <location>
        <begin position="2"/>
        <end position="115"/>
    </location>
</feature>
<feature type="DNA-binding region" description="OmpR/PhoB-type" evidence="5">
    <location>
        <begin position="126"/>
        <end position="224"/>
    </location>
</feature>
<feature type="modified residue" description="4-aspartylphosphate" evidence="4">
    <location>
        <position position="51"/>
    </location>
</feature>
<feature type="modified residue" description="Phosphothreonine" evidence="3">
    <location>
        <position position="128"/>
    </location>
</feature>
<feature type="modified residue" description="Phosphothreonine" evidence="3">
    <location>
        <position position="130"/>
    </location>
</feature>
<feature type="modified residue" description="Phosphothreonine" evidence="3">
    <location>
        <position position="149"/>
    </location>
</feature>
<evidence type="ECO:0000250" key="1"/>
<evidence type="ECO:0000250" key="2">
    <source>
        <dbReference type="UniProtKB" id="Q2G0D9"/>
    </source>
</evidence>
<evidence type="ECO:0000250" key="3">
    <source>
        <dbReference type="UniProtKB" id="Q2G0E0"/>
    </source>
</evidence>
<evidence type="ECO:0000255" key="4">
    <source>
        <dbReference type="PROSITE-ProRule" id="PRU00169"/>
    </source>
</evidence>
<evidence type="ECO:0000255" key="5">
    <source>
        <dbReference type="PROSITE-ProRule" id="PRU01091"/>
    </source>
</evidence>
<dbReference type="EMBL" id="AB240055">
    <property type="protein sequence ID" value="BAE47968.1"/>
    <property type="molecule type" value="Genomic_DNA"/>
</dbReference>
<dbReference type="EMBL" id="BA000018">
    <property type="protein sequence ID" value="BAB41847.1"/>
    <property type="molecule type" value="Genomic_DNA"/>
</dbReference>
<dbReference type="PIR" id="D89836">
    <property type="entry name" value="D89836"/>
</dbReference>
<dbReference type="RefSeq" id="WP_001166500.1">
    <property type="nucleotide sequence ID" value="NC_002745.2"/>
</dbReference>
<dbReference type="SMR" id="Q99VW2"/>
<dbReference type="EnsemblBacteria" id="BAB41847">
    <property type="protein sequence ID" value="BAB41847"/>
    <property type="gene ID" value="BAB41847"/>
</dbReference>
<dbReference type="KEGG" id="sau:SA0614"/>
<dbReference type="HOGENOM" id="CLU_000445_30_3_9"/>
<dbReference type="GO" id="GO:0005829">
    <property type="term" value="C:cytosol"/>
    <property type="evidence" value="ECO:0007669"/>
    <property type="project" value="TreeGrafter"/>
</dbReference>
<dbReference type="GO" id="GO:0032993">
    <property type="term" value="C:protein-DNA complex"/>
    <property type="evidence" value="ECO:0007669"/>
    <property type="project" value="TreeGrafter"/>
</dbReference>
<dbReference type="GO" id="GO:0000156">
    <property type="term" value="F:phosphorelay response regulator activity"/>
    <property type="evidence" value="ECO:0007669"/>
    <property type="project" value="TreeGrafter"/>
</dbReference>
<dbReference type="GO" id="GO:0000976">
    <property type="term" value="F:transcription cis-regulatory region binding"/>
    <property type="evidence" value="ECO:0007669"/>
    <property type="project" value="TreeGrafter"/>
</dbReference>
<dbReference type="GO" id="GO:0006355">
    <property type="term" value="P:regulation of DNA-templated transcription"/>
    <property type="evidence" value="ECO:0007669"/>
    <property type="project" value="InterPro"/>
</dbReference>
<dbReference type="GO" id="GO:0046677">
    <property type="term" value="P:response to antibiotic"/>
    <property type="evidence" value="ECO:0007669"/>
    <property type="project" value="UniProtKB-KW"/>
</dbReference>
<dbReference type="CDD" id="cd18159">
    <property type="entry name" value="REC_OmpR_NsrR-like"/>
    <property type="match status" value="1"/>
</dbReference>
<dbReference type="CDD" id="cd00383">
    <property type="entry name" value="trans_reg_C"/>
    <property type="match status" value="1"/>
</dbReference>
<dbReference type="FunFam" id="3.40.50.2300:FF:000232">
    <property type="entry name" value="Response regulator GraR"/>
    <property type="match status" value="1"/>
</dbReference>
<dbReference type="FunFam" id="1.10.10.10:FF:000546">
    <property type="entry name" value="Two-component response regulator GraR"/>
    <property type="match status" value="1"/>
</dbReference>
<dbReference type="Gene3D" id="3.40.50.2300">
    <property type="match status" value="1"/>
</dbReference>
<dbReference type="Gene3D" id="1.10.10.10">
    <property type="entry name" value="Winged helix-like DNA-binding domain superfamily/Winged helix DNA-binding domain"/>
    <property type="match status" value="1"/>
</dbReference>
<dbReference type="InterPro" id="IPR011006">
    <property type="entry name" value="CheY-like_superfamily"/>
</dbReference>
<dbReference type="InterPro" id="IPR001867">
    <property type="entry name" value="OmpR/PhoB-type_DNA-bd"/>
</dbReference>
<dbReference type="InterPro" id="IPR016032">
    <property type="entry name" value="Sig_transdc_resp-reg_C-effctor"/>
</dbReference>
<dbReference type="InterPro" id="IPR001789">
    <property type="entry name" value="Sig_transdc_resp-reg_receiver"/>
</dbReference>
<dbReference type="InterPro" id="IPR039420">
    <property type="entry name" value="WalR-like"/>
</dbReference>
<dbReference type="InterPro" id="IPR036388">
    <property type="entry name" value="WH-like_DNA-bd_sf"/>
</dbReference>
<dbReference type="PANTHER" id="PTHR48111">
    <property type="entry name" value="REGULATOR OF RPOS"/>
    <property type="match status" value="1"/>
</dbReference>
<dbReference type="PANTHER" id="PTHR48111:SF27">
    <property type="entry name" value="SENSORY TRANSDUCTION PROTEIN BCER"/>
    <property type="match status" value="1"/>
</dbReference>
<dbReference type="Pfam" id="PF00072">
    <property type="entry name" value="Response_reg"/>
    <property type="match status" value="1"/>
</dbReference>
<dbReference type="Pfam" id="PF00486">
    <property type="entry name" value="Trans_reg_C"/>
    <property type="match status" value="1"/>
</dbReference>
<dbReference type="SMART" id="SM00448">
    <property type="entry name" value="REC"/>
    <property type="match status" value="1"/>
</dbReference>
<dbReference type="SMART" id="SM00862">
    <property type="entry name" value="Trans_reg_C"/>
    <property type="match status" value="1"/>
</dbReference>
<dbReference type="SUPFAM" id="SSF46894">
    <property type="entry name" value="C-terminal effector domain of the bipartite response regulators"/>
    <property type="match status" value="1"/>
</dbReference>
<dbReference type="SUPFAM" id="SSF52172">
    <property type="entry name" value="CheY-like"/>
    <property type="match status" value="1"/>
</dbReference>
<dbReference type="PROSITE" id="PS51755">
    <property type="entry name" value="OMPR_PHOB"/>
    <property type="match status" value="1"/>
</dbReference>
<dbReference type="PROSITE" id="PS50110">
    <property type="entry name" value="RESPONSE_REGULATORY"/>
    <property type="match status" value="1"/>
</dbReference>
<sequence length="224" mass="26066">MQILLVEDDNTLFQELKKELEQWDFNVAGIEDFGKVMDTFESFNPEIVILDVQLPKYDGFYWCRKMREVSNVPILFLSSRDNPMDQVMSMELGADDYMQKPFYTNVLIAKLQAIYRRVYEFTAEEKRTLTWQDAVVDLSKDSIQKGDDTIFLSKTEMIILEILITKKNQIVSRDTIITALWDDEAFVSDNTLTVNVNRLRKKLSEISMDSAIETKVGKGYMAHE</sequence>
<reference key="1">
    <citation type="journal article" date="2005" name="Antimicrob. Agents Chemother.">
        <title>DNA microarray-based identification of genes associated with glycopeptide resistance in Staphylococcus aureus.</title>
        <authorList>
            <person name="Cui L."/>
            <person name="Lian J.-Q."/>
            <person name="Neoh H.-M."/>
            <person name="Reyes E."/>
            <person name="Hiramatsu K."/>
        </authorList>
    </citation>
    <scope>NUCLEOTIDE SEQUENCE [GENOMIC DNA]</scope>
</reference>
<reference key="2">
    <citation type="journal article" date="2001" name="Lancet">
        <title>Whole genome sequencing of meticillin-resistant Staphylococcus aureus.</title>
        <authorList>
            <person name="Kuroda M."/>
            <person name="Ohta T."/>
            <person name="Uchiyama I."/>
            <person name="Baba T."/>
            <person name="Yuzawa H."/>
            <person name="Kobayashi I."/>
            <person name="Cui L."/>
            <person name="Oguchi A."/>
            <person name="Aoki K."/>
            <person name="Nagai Y."/>
            <person name="Lian J.-Q."/>
            <person name="Ito T."/>
            <person name="Kanamori M."/>
            <person name="Matsumaru H."/>
            <person name="Maruyama A."/>
            <person name="Murakami H."/>
            <person name="Hosoyama A."/>
            <person name="Mizutani-Ui Y."/>
            <person name="Takahashi N.K."/>
            <person name="Sawano T."/>
            <person name="Inoue R."/>
            <person name="Kaito C."/>
            <person name="Sekimizu K."/>
            <person name="Hirakawa H."/>
            <person name="Kuhara S."/>
            <person name="Goto S."/>
            <person name="Yabuzaki J."/>
            <person name="Kanehisa M."/>
            <person name="Yamashita A."/>
            <person name="Oshima K."/>
            <person name="Furuya K."/>
            <person name="Yoshino C."/>
            <person name="Shiba T."/>
            <person name="Hattori M."/>
            <person name="Ogasawara N."/>
            <person name="Hayashi H."/>
            <person name="Hiramatsu K."/>
        </authorList>
    </citation>
    <scope>NUCLEOTIDE SEQUENCE [LARGE SCALE GENOMIC DNA]</scope>
    <source>
        <strain>N315</strain>
    </source>
</reference>
<protein>
    <recommendedName>
        <fullName>Response regulator protein GraR</fullName>
    </recommendedName>
    <alternativeName>
        <fullName>Glycopeptide resistance-associated protein R</fullName>
    </alternativeName>
</protein>
<organism>
    <name type="scientific">Staphylococcus aureus (strain N315)</name>
    <dbReference type="NCBI Taxonomy" id="158879"/>
    <lineage>
        <taxon>Bacteria</taxon>
        <taxon>Bacillati</taxon>
        <taxon>Bacillota</taxon>
        <taxon>Bacilli</taxon>
        <taxon>Bacillales</taxon>
        <taxon>Staphylococcaceae</taxon>
        <taxon>Staphylococcus</taxon>
    </lineage>
</organism>
<proteinExistence type="inferred from homology"/>
<keyword id="KW-0010">Activator</keyword>
<keyword id="KW-0046">Antibiotic resistance</keyword>
<keyword id="KW-0963">Cytoplasm</keyword>
<keyword id="KW-0238">DNA-binding</keyword>
<keyword id="KW-0597">Phosphoprotein</keyword>
<keyword id="KW-0678">Repressor</keyword>
<keyword id="KW-0804">Transcription</keyword>
<keyword id="KW-0805">Transcription regulation</keyword>
<keyword id="KW-0902">Two-component regulatory system</keyword>
<keyword id="KW-0843">Virulence</keyword>
<name>GRAR_STAAN</name>
<comment type="function">
    <text evidence="3">Member of the two-component regulatory system GraR/GraS involved in resistance against cationic antimicrobial peptides (CAMPs). Upon phosphorylation by GraS, functions as a transcription regulator by direct binding to promoter regions of target genes such as adhesins, exoproteins, transporters, toxins, and proteins involved in cell wall synthesis. Down-regulates the expression of many genes involved in RNA and amino acid synthesis or glycolysis.</text>
</comment>
<comment type="subunit">
    <text evidence="2">Interacts with GraX.</text>
</comment>
<comment type="subcellular location">
    <subcellularLocation>
        <location evidence="1">Cytoplasm</location>
    </subcellularLocation>
</comment>
<comment type="PTM">
    <text evidence="3">Phosphorylated by GraS. Phosphorylated by Stk1; phosphorylation increases the DNA-binding activity of GraR.</text>
</comment>
<gene>
    <name type="primary">graR</name>
    <name type="ordered locus">SA0614</name>
</gene>
<accession>Q99VW2</accession>
<accession>Q33C67</accession>